<organism>
    <name type="scientific">Prochlorococcus marinus (strain MIT 9303)</name>
    <dbReference type="NCBI Taxonomy" id="59922"/>
    <lineage>
        <taxon>Bacteria</taxon>
        <taxon>Bacillati</taxon>
        <taxon>Cyanobacteriota</taxon>
        <taxon>Cyanophyceae</taxon>
        <taxon>Synechococcales</taxon>
        <taxon>Prochlorococcaceae</taxon>
        <taxon>Prochlorococcus</taxon>
    </lineage>
</organism>
<reference key="1">
    <citation type="journal article" date="2007" name="PLoS Genet.">
        <title>Patterns and implications of gene gain and loss in the evolution of Prochlorococcus.</title>
        <authorList>
            <person name="Kettler G.C."/>
            <person name="Martiny A.C."/>
            <person name="Huang K."/>
            <person name="Zucker J."/>
            <person name="Coleman M.L."/>
            <person name="Rodrigue S."/>
            <person name="Chen F."/>
            <person name="Lapidus A."/>
            <person name="Ferriera S."/>
            <person name="Johnson J."/>
            <person name="Steglich C."/>
            <person name="Church G.M."/>
            <person name="Richardson P."/>
            <person name="Chisholm S.W."/>
        </authorList>
    </citation>
    <scope>NUCLEOTIDE SEQUENCE [LARGE SCALE GENOMIC DNA]</scope>
    <source>
        <strain>MIT 9303</strain>
    </source>
</reference>
<name>PSBX_PROM3</name>
<comment type="function">
    <text evidence="1">Involved in the binding and/or turnover of quinones at the Q(B) site of photosystem II (PSII). PSII is a light-driven water plastoquinone oxidoreductase, using light energy to abstract electrons from H(2)O, generating a proton gradient subsequently used for ATP formation.</text>
</comment>
<comment type="subunit">
    <text evidence="2">PSII is composed of 1 copy each of membrane proteins PsbA, PsbB, PsbC, PsbD, PsbE, PsbF, PsbH, PsbI, PsbJ, PsbK, PsbL, PsbM, PsbT, PsbX, PsbY, Psb30/Ycf12, peripheral proteins PsbO, CyanoQ (PsbQ), PsbU, PsbV and a large number of cofactors. It forms dimeric complexes.</text>
</comment>
<comment type="subcellular location">
    <subcellularLocation>
        <location evidence="1">Cellular thylakoid membrane</location>
        <topology evidence="1">Single-pass membrane protein</topology>
    </subcellularLocation>
</comment>
<comment type="similarity">
    <text evidence="1">Belongs to the PsbX family. Type 1 subfamily.</text>
</comment>
<feature type="chain" id="PRO_0000345372" description="Photosystem II reaction center protein X">
    <location>
        <begin position="1"/>
        <end position="39"/>
    </location>
</feature>
<feature type="transmembrane region" description="Helical" evidence="1">
    <location>
        <begin position="10"/>
        <end position="30"/>
    </location>
</feature>
<evidence type="ECO:0000255" key="1">
    <source>
        <dbReference type="HAMAP-Rule" id="MF_01386"/>
    </source>
</evidence>
<evidence type="ECO:0000305" key="2"/>
<keyword id="KW-0472">Membrane</keyword>
<keyword id="KW-0602">Photosynthesis</keyword>
<keyword id="KW-0604">Photosystem II</keyword>
<keyword id="KW-0793">Thylakoid</keyword>
<keyword id="KW-0812">Transmembrane</keyword>
<keyword id="KW-1133">Transmembrane helix</keyword>
<dbReference type="EMBL" id="CP000554">
    <property type="protein sequence ID" value="ABM77073.1"/>
    <property type="molecule type" value="Genomic_DNA"/>
</dbReference>
<dbReference type="RefSeq" id="WP_011130957.1">
    <property type="nucleotide sequence ID" value="NC_008820.1"/>
</dbReference>
<dbReference type="SMR" id="A2C6G3"/>
<dbReference type="STRING" id="59922.P9303_03201"/>
<dbReference type="KEGG" id="pmf:P9303_03201"/>
<dbReference type="HOGENOM" id="CLU_212837_1_0_3"/>
<dbReference type="BioCyc" id="PMAR59922:G1G80-302-MONOMER"/>
<dbReference type="Proteomes" id="UP000002274">
    <property type="component" value="Chromosome"/>
</dbReference>
<dbReference type="GO" id="GO:0009523">
    <property type="term" value="C:photosystem II"/>
    <property type="evidence" value="ECO:0007669"/>
    <property type="project" value="UniProtKB-KW"/>
</dbReference>
<dbReference type="GO" id="GO:0031676">
    <property type="term" value="C:plasma membrane-derived thylakoid membrane"/>
    <property type="evidence" value="ECO:0007669"/>
    <property type="project" value="UniProtKB-SubCell"/>
</dbReference>
<dbReference type="GO" id="GO:0015979">
    <property type="term" value="P:photosynthesis"/>
    <property type="evidence" value="ECO:0007669"/>
    <property type="project" value="UniProtKB-UniRule"/>
</dbReference>
<dbReference type="Gene3D" id="1.20.5.510">
    <property type="entry name" value="Single helix bin"/>
    <property type="match status" value="1"/>
</dbReference>
<dbReference type="HAMAP" id="MF_01386">
    <property type="entry name" value="PSII_PsbX_1"/>
    <property type="match status" value="1"/>
</dbReference>
<dbReference type="InterPro" id="IPR009518">
    <property type="entry name" value="PSII_PsbX"/>
</dbReference>
<dbReference type="InterPro" id="IPR023431">
    <property type="entry name" value="PSII_PsbX_type_1_subfam"/>
</dbReference>
<dbReference type="Pfam" id="PF06596">
    <property type="entry name" value="PsbX"/>
    <property type="match status" value="1"/>
</dbReference>
<gene>
    <name evidence="1" type="primary">psbX</name>
    <name type="ordered locus">P9303_03201</name>
</gene>
<sequence length="39" mass="4221">MTASLANYLSSLVWAAVIVVIPAAVALVLISQNDQMYRK</sequence>
<protein>
    <recommendedName>
        <fullName evidence="1">Photosystem II reaction center protein X</fullName>
    </recommendedName>
</protein>
<proteinExistence type="inferred from homology"/>
<accession>A2C6G3</accession>